<gene>
    <name type="primary">MRPL19</name>
</gene>
<protein>
    <recommendedName>
        <fullName evidence="4">Large ribosomal subunit protein bL19m</fullName>
    </recommendedName>
    <alternativeName>
        <fullName>39S ribosomal protein L19, mitochondrial</fullName>
        <shortName>L19mt</shortName>
        <shortName>MRP-L19</shortName>
    </alternativeName>
</protein>
<name>RM19_PONAB</name>
<feature type="transit peptide" description="Mitochondrion" evidence="2">
    <location>
        <begin position="1"/>
        <end status="unknown"/>
    </location>
</feature>
<feature type="chain" id="PRO_0000230303" description="Large ribosomal subunit protein bL19m">
    <location>
        <begin status="unknown"/>
        <end position="292"/>
    </location>
</feature>
<feature type="region of interest" description="Disordered" evidence="3">
    <location>
        <begin position="40"/>
        <end position="61"/>
    </location>
</feature>
<feature type="modified residue" description="Phosphoserine" evidence="1">
    <location>
        <position position="77"/>
    </location>
</feature>
<reference key="1">
    <citation type="submission" date="2004-11" db="EMBL/GenBank/DDBJ databases">
        <authorList>
            <consortium name="The German cDNA consortium"/>
        </authorList>
    </citation>
    <scope>NUCLEOTIDE SEQUENCE [LARGE SCALE MRNA]</scope>
    <source>
        <tissue>Heart</tissue>
    </source>
</reference>
<dbReference type="EMBL" id="CR859727">
    <property type="protein sequence ID" value="CAH91886.1"/>
    <property type="molecule type" value="mRNA"/>
</dbReference>
<dbReference type="RefSeq" id="NP_001127477.1">
    <property type="nucleotide sequence ID" value="NM_001134005.1"/>
</dbReference>
<dbReference type="SMR" id="Q5R8M4"/>
<dbReference type="FunCoup" id="Q5R8M4">
    <property type="interactions" value="2885"/>
</dbReference>
<dbReference type="STRING" id="9601.ENSPPYP00000013666"/>
<dbReference type="Ensembl" id="ENSPPYT00000014223.2">
    <property type="protein sequence ID" value="ENSPPYP00000013666.2"/>
    <property type="gene ID" value="ENSPPYG00000012255.2"/>
</dbReference>
<dbReference type="GeneID" id="100174550"/>
<dbReference type="KEGG" id="pon:100174550"/>
<dbReference type="CTD" id="9801"/>
<dbReference type="eggNOG" id="KOG1698">
    <property type="taxonomic scope" value="Eukaryota"/>
</dbReference>
<dbReference type="GeneTree" id="ENSGT00390000009415"/>
<dbReference type="InParanoid" id="Q5R8M4"/>
<dbReference type="OMA" id="IHEIQVV"/>
<dbReference type="OrthoDB" id="432645at2759"/>
<dbReference type="Proteomes" id="UP000001595">
    <property type="component" value="Chromosome 2A"/>
</dbReference>
<dbReference type="GO" id="GO:0005762">
    <property type="term" value="C:mitochondrial large ribosomal subunit"/>
    <property type="evidence" value="ECO:0000250"/>
    <property type="project" value="UniProtKB"/>
</dbReference>
<dbReference type="GO" id="GO:0005634">
    <property type="term" value="C:nucleus"/>
    <property type="evidence" value="ECO:0007669"/>
    <property type="project" value="Ensembl"/>
</dbReference>
<dbReference type="GO" id="GO:0003735">
    <property type="term" value="F:structural constituent of ribosome"/>
    <property type="evidence" value="ECO:0007669"/>
    <property type="project" value="InterPro"/>
</dbReference>
<dbReference type="GO" id="GO:0006412">
    <property type="term" value="P:translation"/>
    <property type="evidence" value="ECO:0007669"/>
    <property type="project" value="InterPro"/>
</dbReference>
<dbReference type="FunFam" id="2.30.30.790:FF:000002">
    <property type="entry name" value="39S ribosomal protein L19, mitochondrial"/>
    <property type="match status" value="1"/>
</dbReference>
<dbReference type="Gene3D" id="2.30.30.790">
    <property type="match status" value="1"/>
</dbReference>
<dbReference type="InterPro" id="IPR001857">
    <property type="entry name" value="Ribosomal_bL19"/>
</dbReference>
<dbReference type="InterPro" id="IPR038657">
    <property type="entry name" value="Ribosomal_bL19_sf"/>
</dbReference>
<dbReference type="InterPro" id="IPR008991">
    <property type="entry name" value="Translation_prot_SH3-like_sf"/>
</dbReference>
<dbReference type="PANTHER" id="PTHR15680:SF9">
    <property type="entry name" value="LARGE RIBOSOMAL SUBUNIT PROTEIN BL19M"/>
    <property type="match status" value="1"/>
</dbReference>
<dbReference type="PANTHER" id="PTHR15680">
    <property type="entry name" value="RIBOSOMAL PROTEIN L19"/>
    <property type="match status" value="1"/>
</dbReference>
<dbReference type="Pfam" id="PF01245">
    <property type="entry name" value="Ribosomal_L19"/>
    <property type="match status" value="1"/>
</dbReference>
<dbReference type="PRINTS" id="PR00061">
    <property type="entry name" value="RIBOSOMALL19"/>
</dbReference>
<dbReference type="SUPFAM" id="SSF50104">
    <property type="entry name" value="Translation proteins SH3-like domain"/>
    <property type="match status" value="1"/>
</dbReference>
<proteinExistence type="evidence at transcript level"/>
<comment type="subunit">
    <text evidence="1">Component of the mitochondrial ribosome large subunit (39S) which comprises a 16S rRNA and about 50 distinct proteins.</text>
</comment>
<comment type="subcellular location">
    <subcellularLocation>
        <location evidence="1">Mitochondrion</location>
    </subcellularLocation>
</comment>
<comment type="similarity">
    <text evidence="4">Belongs to the bacterial ribosomal protein bL19 family.</text>
</comment>
<organism>
    <name type="scientific">Pongo abelii</name>
    <name type="common">Sumatran orangutan</name>
    <name type="synonym">Pongo pygmaeus abelii</name>
    <dbReference type="NCBI Taxonomy" id="9601"/>
    <lineage>
        <taxon>Eukaryota</taxon>
        <taxon>Metazoa</taxon>
        <taxon>Chordata</taxon>
        <taxon>Craniata</taxon>
        <taxon>Vertebrata</taxon>
        <taxon>Euteleostomi</taxon>
        <taxon>Mammalia</taxon>
        <taxon>Eutheria</taxon>
        <taxon>Euarchontoglires</taxon>
        <taxon>Primates</taxon>
        <taxon>Haplorrhini</taxon>
        <taxon>Catarrhini</taxon>
        <taxon>Hominidae</taxon>
        <taxon>Pongo</taxon>
    </lineage>
</organism>
<evidence type="ECO:0000250" key="1">
    <source>
        <dbReference type="UniProtKB" id="P49406"/>
    </source>
</evidence>
<evidence type="ECO:0000255" key="2"/>
<evidence type="ECO:0000256" key="3">
    <source>
        <dbReference type="SAM" id="MobiDB-lite"/>
    </source>
</evidence>
<evidence type="ECO:0000305" key="4"/>
<accession>Q5R8M4</accession>
<keyword id="KW-0496">Mitochondrion</keyword>
<keyword id="KW-0597">Phosphoprotein</keyword>
<keyword id="KW-1185">Reference proteome</keyword>
<keyword id="KW-0687">Ribonucleoprotein</keyword>
<keyword id="KW-0689">Ribosomal protein</keyword>
<keyword id="KW-0809">Transit peptide</keyword>
<sequence>MAACIAAGYCAAMGLGRSFQAARTLLPKPASIACRVHAGPVRQQSTGPSEPGAFQPPPKPVILDKRRPVELERRFLSPEFIPPRGRTDPLKFQMERKDMLERRKVLHIPEFYVGSILRVTTADPYASGKISQFLGICIQRSGRGLGATFILRNVIEGQGVEICFELYNPRVQEIQVVKLEKRLDDSLLYLRDALPEYSTFDVNMKPEVQEPNQKVPVNELKVKMKPKPWSKRWERPNFNIKGIRFDLCLTEEQMKEAQKWSQPWLEFDMMREYDTSKIEAAIWKEIEASKRS</sequence>